<organism>
    <name type="scientific">Shewanella oneidensis (strain ATCC 700550 / JCM 31522 / CIP 106686 / LMG 19005 / NCIMB 14063 / MR-1)</name>
    <dbReference type="NCBI Taxonomy" id="211586"/>
    <lineage>
        <taxon>Bacteria</taxon>
        <taxon>Pseudomonadati</taxon>
        <taxon>Pseudomonadota</taxon>
        <taxon>Gammaproteobacteria</taxon>
        <taxon>Alteromonadales</taxon>
        <taxon>Shewanellaceae</taxon>
        <taxon>Shewanella</taxon>
    </lineage>
</organism>
<proteinExistence type="inferred from homology"/>
<name>NADA_SHEON</name>
<gene>
    <name evidence="1" type="primary">nadA</name>
    <name type="ordered locus">SO_2342</name>
</gene>
<reference key="1">
    <citation type="journal article" date="2002" name="Nat. Biotechnol.">
        <title>Genome sequence of the dissimilatory metal ion-reducing bacterium Shewanella oneidensis.</title>
        <authorList>
            <person name="Heidelberg J.F."/>
            <person name="Paulsen I.T."/>
            <person name="Nelson K.E."/>
            <person name="Gaidos E.J."/>
            <person name="Nelson W.C."/>
            <person name="Read T.D."/>
            <person name="Eisen J.A."/>
            <person name="Seshadri R."/>
            <person name="Ward N.L."/>
            <person name="Methe B.A."/>
            <person name="Clayton R.A."/>
            <person name="Meyer T."/>
            <person name="Tsapin A."/>
            <person name="Scott J."/>
            <person name="Beanan M.J."/>
            <person name="Brinkac L.M."/>
            <person name="Daugherty S.C."/>
            <person name="DeBoy R.T."/>
            <person name="Dodson R.J."/>
            <person name="Durkin A.S."/>
            <person name="Haft D.H."/>
            <person name="Kolonay J.F."/>
            <person name="Madupu R."/>
            <person name="Peterson J.D."/>
            <person name="Umayam L.A."/>
            <person name="White O."/>
            <person name="Wolf A.M."/>
            <person name="Vamathevan J.J."/>
            <person name="Weidman J.F."/>
            <person name="Impraim M."/>
            <person name="Lee K."/>
            <person name="Berry K.J."/>
            <person name="Lee C."/>
            <person name="Mueller J."/>
            <person name="Khouri H.M."/>
            <person name="Gill J."/>
            <person name="Utterback T.R."/>
            <person name="McDonald L.A."/>
            <person name="Feldblyum T.V."/>
            <person name="Smith H.O."/>
            <person name="Venter J.C."/>
            <person name="Nealson K.H."/>
            <person name="Fraser C.M."/>
        </authorList>
    </citation>
    <scope>NUCLEOTIDE SEQUENCE [LARGE SCALE GENOMIC DNA]</scope>
    <source>
        <strain>ATCC 700550 / JCM 31522 / CIP 106686 / LMG 19005 / NCIMB 14063 / MR-1</strain>
    </source>
</reference>
<reference key="2">
    <citation type="journal article" date="2011" name="J. Biol. Chem.">
        <title>Identification of nicotinamide mononucleotide deamidase of the bacterial pyridine nucleotide cycle reveals a novel broadly conserved amidohydrolase family.</title>
        <authorList>
            <person name="Galeazzi L."/>
            <person name="Bocci P."/>
            <person name="Amici A."/>
            <person name="Brunetti L."/>
            <person name="Ruggieri S."/>
            <person name="Romine M."/>
            <person name="Reed S."/>
            <person name="Osterman A.L."/>
            <person name="Rodionov D.A."/>
            <person name="Sorci L."/>
            <person name="Raffaelli N."/>
        </authorList>
    </citation>
    <scope>DISRUPTION PHENOTYPE</scope>
    <source>
        <strain>ATCC 700550 / JCM 31522 / CIP 106686 / LMG 19005 / NCIMB 14063 / MR-1</strain>
    </source>
</reference>
<sequence length="357" mass="38709">MSSSLFAPTIETIDYPFPPKPVPLSDAQKADYKARIKQLLIEKDAVLVAHYYTDPEIQALAEETGGCVSDSLEMARFGRDHPAKTLIVAGVKFMGETAKILSPEKTILMPTLEATCSLDLGCPIDKFSAFCDAHPDHTVVVYANTSAAVKARADWVVTSSIALEIVEHLDSEGKKIIWGPDRHLGSYIAKQTGAEMLMWQGDCIVHDEFKANALRDLKSVYPDAAILVHPESPASVVAMADAVGSTSQLIKAAQTMPNERFIVATDRGIFYKMQQAAPGKTLIEAPTGGNGATCKSCAHCPWMAMNGLKAIEASLSNSDKTTHEIFVDEDLRVKALIPLTRMLDFAKTLNMKVKGNA</sequence>
<evidence type="ECO:0000255" key="1">
    <source>
        <dbReference type="HAMAP-Rule" id="MF_00567"/>
    </source>
</evidence>
<evidence type="ECO:0000269" key="2">
    <source>
    </source>
</evidence>
<dbReference type="EC" id="2.5.1.72" evidence="1"/>
<dbReference type="EMBL" id="AE014299">
    <property type="protein sequence ID" value="AAN55376.1"/>
    <property type="molecule type" value="Genomic_DNA"/>
</dbReference>
<dbReference type="RefSeq" id="NP_717932.1">
    <property type="nucleotide sequence ID" value="NC_004347.2"/>
</dbReference>
<dbReference type="RefSeq" id="WP_011072333.1">
    <property type="nucleotide sequence ID" value="NC_004347.2"/>
</dbReference>
<dbReference type="SMR" id="Q8EEN5"/>
<dbReference type="STRING" id="211586.SO_2342"/>
<dbReference type="PaxDb" id="211586-SO_2342"/>
<dbReference type="KEGG" id="son:SO_2342"/>
<dbReference type="PATRIC" id="fig|211586.12.peg.2256"/>
<dbReference type="eggNOG" id="COG0379">
    <property type="taxonomic scope" value="Bacteria"/>
</dbReference>
<dbReference type="HOGENOM" id="CLU_047382_1_0_6"/>
<dbReference type="OrthoDB" id="9801204at2"/>
<dbReference type="PhylomeDB" id="Q8EEN5"/>
<dbReference type="BioCyc" id="SONE211586:G1GMP-2140-MONOMER"/>
<dbReference type="UniPathway" id="UPA00253">
    <property type="reaction ID" value="UER00327"/>
</dbReference>
<dbReference type="Proteomes" id="UP000008186">
    <property type="component" value="Chromosome"/>
</dbReference>
<dbReference type="GO" id="GO:0005829">
    <property type="term" value="C:cytosol"/>
    <property type="evidence" value="ECO:0000318"/>
    <property type="project" value="GO_Central"/>
</dbReference>
<dbReference type="GO" id="GO:0051539">
    <property type="term" value="F:4 iron, 4 sulfur cluster binding"/>
    <property type="evidence" value="ECO:0000318"/>
    <property type="project" value="GO_Central"/>
</dbReference>
<dbReference type="GO" id="GO:0046872">
    <property type="term" value="F:metal ion binding"/>
    <property type="evidence" value="ECO:0007669"/>
    <property type="project" value="UniProtKB-KW"/>
</dbReference>
<dbReference type="GO" id="GO:0008987">
    <property type="term" value="F:quinolinate synthetase A activity"/>
    <property type="evidence" value="ECO:0000318"/>
    <property type="project" value="GO_Central"/>
</dbReference>
<dbReference type="GO" id="GO:0034628">
    <property type="term" value="P:'de novo' NAD biosynthetic process from L-aspartate"/>
    <property type="evidence" value="ECO:0000318"/>
    <property type="project" value="GO_Central"/>
</dbReference>
<dbReference type="FunFam" id="3.40.50.10800:FF:000001">
    <property type="entry name" value="Quinolinate synthase A"/>
    <property type="match status" value="1"/>
</dbReference>
<dbReference type="FunFam" id="3.40.50.10800:FF:000003">
    <property type="entry name" value="Quinolinate synthase A"/>
    <property type="match status" value="1"/>
</dbReference>
<dbReference type="Gene3D" id="3.40.50.10800">
    <property type="entry name" value="NadA-like"/>
    <property type="match status" value="3"/>
</dbReference>
<dbReference type="HAMAP" id="MF_00567">
    <property type="entry name" value="NadA_type1"/>
    <property type="match status" value="1"/>
</dbReference>
<dbReference type="InterPro" id="IPR003473">
    <property type="entry name" value="NadA"/>
</dbReference>
<dbReference type="InterPro" id="IPR036094">
    <property type="entry name" value="NadA_sf"/>
</dbReference>
<dbReference type="InterPro" id="IPR023513">
    <property type="entry name" value="Quinolinate_synth_A_type1"/>
</dbReference>
<dbReference type="NCBIfam" id="TIGR00550">
    <property type="entry name" value="nadA"/>
    <property type="match status" value="1"/>
</dbReference>
<dbReference type="NCBIfam" id="NF006877">
    <property type="entry name" value="PRK09375.1-1"/>
    <property type="match status" value="1"/>
</dbReference>
<dbReference type="NCBIfam" id="NF006878">
    <property type="entry name" value="PRK09375.1-2"/>
    <property type="match status" value="1"/>
</dbReference>
<dbReference type="PANTHER" id="PTHR30573:SF0">
    <property type="entry name" value="QUINOLINATE SYNTHASE, CHLOROPLASTIC"/>
    <property type="match status" value="1"/>
</dbReference>
<dbReference type="PANTHER" id="PTHR30573">
    <property type="entry name" value="QUINOLINATE SYNTHETASE A"/>
    <property type="match status" value="1"/>
</dbReference>
<dbReference type="Pfam" id="PF02445">
    <property type="entry name" value="NadA"/>
    <property type="match status" value="1"/>
</dbReference>
<dbReference type="SUPFAM" id="SSF142754">
    <property type="entry name" value="NadA-like"/>
    <property type="match status" value="1"/>
</dbReference>
<accession>Q8EEN5</accession>
<keyword id="KW-0004">4Fe-4S</keyword>
<keyword id="KW-0963">Cytoplasm</keyword>
<keyword id="KW-0408">Iron</keyword>
<keyword id="KW-0411">Iron-sulfur</keyword>
<keyword id="KW-0479">Metal-binding</keyword>
<keyword id="KW-0662">Pyridine nucleotide biosynthesis</keyword>
<keyword id="KW-1185">Reference proteome</keyword>
<keyword id="KW-0808">Transferase</keyword>
<comment type="function">
    <text evidence="1">Catalyzes the condensation of iminoaspartate with dihydroxyacetone phosphate to form quinolinate.</text>
</comment>
<comment type="catalytic activity">
    <reaction evidence="1">
        <text>iminosuccinate + dihydroxyacetone phosphate = quinolinate + phosphate + 2 H2O + H(+)</text>
        <dbReference type="Rhea" id="RHEA:25888"/>
        <dbReference type="ChEBI" id="CHEBI:15377"/>
        <dbReference type="ChEBI" id="CHEBI:15378"/>
        <dbReference type="ChEBI" id="CHEBI:29959"/>
        <dbReference type="ChEBI" id="CHEBI:43474"/>
        <dbReference type="ChEBI" id="CHEBI:57642"/>
        <dbReference type="ChEBI" id="CHEBI:77875"/>
        <dbReference type="EC" id="2.5.1.72"/>
    </reaction>
    <physiologicalReaction direction="left-to-right" evidence="1">
        <dbReference type="Rhea" id="RHEA:25889"/>
    </physiologicalReaction>
</comment>
<comment type="cofactor">
    <cofactor evidence="1">
        <name>[4Fe-4S] cluster</name>
        <dbReference type="ChEBI" id="CHEBI:49883"/>
    </cofactor>
    <text evidence="1">Binds 1 [4Fe-4S] cluster per subunit.</text>
</comment>
<comment type="pathway">
    <text evidence="1">Cofactor biosynthesis; NAD(+) biosynthesis; quinolinate from iminoaspartate: step 1/1.</text>
</comment>
<comment type="subcellular location">
    <subcellularLocation>
        <location evidence="1">Cytoplasm</location>
    </subcellularLocation>
</comment>
<comment type="disruption phenotype">
    <text evidence="2">Required for growth on defined medium, and on defined medium supplemented with nictotinic acid.</text>
</comment>
<comment type="similarity">
    <text evidence="1">Belongs to the quinolinate synthase family. Type 1 subfamily.</text>
</comment>
<feature type="chain" id="PRO_0000155771" description="Quinolinate synthase">
    <location>
        <begin position="1"/>
        <end position="357"/>
    </location>
</feature>
<feature type="binding site" evidence="1">
    <location>
        <position position="50"/>
    </location>
    <ligand>
        <name>iminosuccinate</name>
        <dbReference type="ChEBI" id="CHEBI:77875"/>
    </ligand>
</feature>
<feature type="binding site" evidence="1">
    <location>
        <position position="71"/>
    </location>
    <ligand>
        <name>iminosuccinate</name>
        <dbReference type="ChEBI" id="CHEBI:77875"/>
    </ligand>
</feature>
<feature type="binding site" evidence="1">
    <location>
        <position position="116"/>
    </location>
    <ligand>
        <name>[4Fe-4S] cluster</name>
        <dbReference type="ChEBI" id="CHEBI:49883"/>
    </ligand>
</feature>
<feature type="binding site" evidence="1">
    <location>
        <begin position="142"/>
        <end position="144"/>
    </location>
    <ligand>
        <name>iminosuccinate</name>
        <dbReference type="ChEBI" id="CHEBI:77875"/>
    </ligand>
</feature>
<feature type="binding site" evidence="1">
    <location>
        <position position="159"/>
    </location>
    <ligand>
        <name>iminosuccinate</name>
        <dbReference type="ChEBI" id="CHEBI:77875"/>
    </ligand>
</feature>
<feature type="binding site" evidence="1">
    <location>
        <position position="203"/>
    </location>
    <ligand>
        <name>[4Fe-4S] cluster</name>
        <dbReference type="ChEBI" id="CHEBI:49883"/>
    </ligand>
</feature>
<feature type="binding site" evidence="1">
    <location>
        <begin position="229"/>
        <end position="231"/>
    </location>
    <ligand>
        <name>iminosuccinate</name>
        <dbReference type="ChEBI" id="CHEBI:77875"/>
    </ligand>
</feature>
<feature type="binding site" evidence="1">
    <location>
        <position position="246"/>
    </location>
    <ligand>
        <name>iminosuccinate</name>
        <dbReference type="ChEBI" id="CHEBI:77875"/>
    </ligand>
</feature>
<feature type="binding site" evidence="1">
    <location>
        <position position="300"/>
    </location>
    <ligand>
        <name>[4Fe-4S] cluster</name>
        <dbReference type="ChEBI" id="CHEBI:49883"/>
    </ligand>
</feature>
<protein>
    <recommendedName>
        <fullName evidence="1">Quinolinate synthase</fullName>
        <ecNumber evidence="1">2.5.1.72</ecNumber>
    </recommendedName>
</protein>